<gene>
    <name evidence="1" type="primary">bioB</name>
    <name type="ordered locus">YPTS_1261</name>
</gene>
<evidence type="ECO:0000255" key="1">
    <source>
        <dbReference type="HAMAP-Rule" id="MF_01694"/>
    </source>
</evidence>
<evidence type="ECO:0000255" key="2">
    <source>
        <dbReference type="PROSITE-ProRule" id="PRU01266"/>
    </source>
</evidence>
<proteinExistence type="inferred from homology"/>
<keyword id="KW-0001">2Fe-2S</keyword>
<keyword id="KW-0004">4Fe-4S</keyword>
<keyword id="KW-0093">Biotin biosynthesis</keyword>
<keyword id="KW-0408">Iron</keyword>
<keyword id="KW-0411">Iron-sulfur</keyword>
<keyword id="KW-0479">Metal-binding</keyword>
<keyword id="KW-0949">S-adenosyl-L-methionine</keyword>
<keyword id="KW-0808">Transferase</keyword>
<feature type="chain" id="PRO_0000381722" description="Biotin synthase">
    <location>
        <begin position="1"/>
        <end position="345"/>
    </location>
</feature>
<feature type="domain" description="Radical SAM core" evidence="2">
    <location>
        <begin position="38"/>
        <end position="256"/>
    </location>
</feature>
<feature type="binding site" evidence="1">
    <location>
        <position position="53"/>
    </location>
    <ligand>
        <name>[4Fe-4S] cluster</name>
        <dbReference type="ChEBI" id="CHEBI:49883"/>
        <note>4Fe-4S-S-AdoMet</note>
    </ligand>
</feature>
<feature type="binding site" evidence="1">
    <location>
        <position position="57"/>
    </location>
    <ligand>
        <name>[4Fe-4S] cluster</name>
        <dbReference type="ChEBI" id="CHEBI:49883"/>
        <note>4Fe-4S-S-AdoMet</note>
    </ligand>
</feature>
<feature type="binding site" evidence="1">
    <location>
        <position position="60"/>
    </location>
    <ligand>
        <name>[4Fe-4S] cluster</name>
        <dbReference type="ChEBI" id="CHEBI:49883"/>
        <note>4Fe-4S-S-AdoMet</note>
    </ligand>
</feature>
<feature type="binding site" evidence="1">
    <location>
        <position position="97"/>
    </location>
    <ligand>
        <name>[2Fe-2S] cluster</name>
        <dbReference type="ChEBI" id="CHEBI:190135"/>
    </ligand>
</feature>
<feature type="binding site" evidence="1">
    <location>
        <position position="128"/>
    </location>
    <ligand>
        <name>[2Fe-2S] cluster</name>
        <dbReference type="ChEBI" id="CHEBI:190135"/>
    </ligand>
</feature>
<feature type="binding site" evidence="1">
    <location>
        <position position="188"/>
    </location>
    <ligand>
        <name>[2Fe-2S] cluster</name>
        <dbReference type="ChEBI" id="CHEBI:190135"/>
    </ligand>
</feature>
<feature type="binding site" evidence="1">
    <location>
        <position position="260"/>
    </location>
    <ligand>
        <name>[2Fe-2S] cluster</name>
        <dbReference type="ChEBI" id="CHEBI:190135"/>
    </ligand>
</feature>
<dbReference type="EC" id="2.8.1.6" evidence="1"/>
<dbReference type="EMBL" id="CP001048">
    <property type="protein sequence ID" value="ACC88236.1"/>
    <property type="molecule type" value="Genomic_DNA"/>
</dbReference>
<dbReference type="RefSeq" id="WP_002210762.1">
    <property type="nucleotide sequence ID" value="NZ_CP009780.1"/>
</dbReference>
<dbReference type="SMR" id="B2K8T0"/>
<dbReference type="GeneID" id="57977290"/>
<dbReference type="KEGG" id="ypb:YPTS_1261"/>
<dbReference type="PATRIC" id="fig|502801.10.peg.610"/>
<dbReference type="UniPathway" id="UPA00078">
    <property type="reaction ID" value="UER00162"/>
</dbReference>
<dbReference type="GO" id="GO:0051537">
    <property type="term" value="F:2 iron, 2 sulfur cluster binding"/>
    <property type="evidence" value="ECO:0007669"/>
    <property type="project" value="UniProtKB-KW"/>
</dbReference>
<dbReference type="GO" id="GO:0051539">
    <property type="term" value="F:4 iron, 4 sulfur cluster binding"/>
    <property type="evidence" value="ECO:0007669"/>
    <property type="project" value="UniProtKB-KW"/>
</dbReference>
<dbReference type="GO" id="GO:0004076">
    <property type="term" value="F:biotin synthase activity"/>
    <property type="evidence" value="ECO:0007669"/>
    <property type="project" value="UniProtKB-UniRule"/>
</dbReference>
<dbReference type="GO" id="GO:0005506">
    <property type="term" value="F:iron ion binding"/>
    <property type="evidence" value="ECO:0007669"/>
    <property type="project" value="UniProtKB-UniRule"/>
</dbReference>
<dbReference type="GO" id="GO:0009102">
    <property type="term" value="P:biotin biosynthetic process"/>
    <property type="evidence" value="ECO:0007669"/>
    <property type="project" value="UniProtKB-UniRule"/>
</dbReference>
<dbReference type="CDD" id="cd01335">
    <property type="entry name" value="Radical_SAM"/>
    <property type="match status" value="1"/>
</dbReference>
<dbReference type="FunFam" id="3.20.20.70:FF:000011">
    <property type="entry name" value="Biotin synthase"/>
    <property type="match status" value="1"/>
</dbReference>
<dbReference type="Gene3D" id="3.20.20.70">
    <property type="entry name" value="Aldolase class I"/>
    <property type="match status" value="1"/>
</dbReference>
<dbReference type="HAMAP" id="MF_01694">
    <property type="entry name" value="BioB"/>
    <property type="match status" value="1"/>
</dbReference>
<dbReference type="InterPro" id="IPR013785">
    <property type="entry name" value="Aldolase_TIM"/>
</dbReference>
<dbReference type="InterPro" id="IPR010722">
    <property type="entry name" value="BATS_dom"/>
</dbReference>
<dbReference type="InterPro" id="IPR002684">
    <property type="entry name" value="Biotin_synth/BioAB"/>
</dbReference>
<dbReference type="InterPro" id="IPR024177">
    <property type="entry name" value="Biotin_synthase"/>
</dbReference>
<dbReference type="InterPro" id="IPR006638">
    <property type="entry name" value="Elp3/MiaA/NifB-like_rSAM"/>
</dbReference>
<dbReference type="InterPro" id="IPR007197">
    <property type="entry name" value="rSAM"/>
</dbReference>
<dbReference type="NCBIfam" id="TIGR00433">
    <property type="entry name" value="bioB"/>
    <property type="match status" value="1"/>
</dbReference>
<dbReference type="PANTHER" id="PTHR22976">
    <property type="entry name" value="BIOTIN SYNTHASE"/>
    <property type="match status" value="1"/>
</dbReference>
<dbReference type="PANTHER" id="PTHR22976:SF2">
    <property type="entry name" value="BIOTIN SYNTHASE, MITOCHONDRIAL"/>
    <property type="match status" value="1"/>
</dbReference>
<dbReference type="Pfam" id="PF06968">
    <property type="entry name" value="BATS"/>
    <property type="match status" value="1"/>
</dbReference>
<dbReference type="Pfam" id="PF04055">
    <property type="entry name" value="Radical_SAM"/>
    <property type="match status" value="1"/>
</dbReference>
<dbReference type="PIRSF" id="PIRSF001619">
    <property type="entry name" value="Biotin_synth"/>
    <property type="match status" value="1"/>
</dbReference>
<dbReference type="SFLD" id="SFLDF00272">
    <property type="entry name" value="biotin_synthase"/>
    <property type="match status" value="1"/>
</dbReference>
<dbReference type="SFLD" id="SFLDS00029">
    <property type="entry name" value="Radical_SAM"/>
    <property type="match status" value="1"/>
</dbReference>
<dbReference type="SMART" id="SM00876">
    <property type="entry name" value="BATS"/>
    <property type="match status" value="1"/>
</dbReference>
<dbReference type="SMART" id="SM00729">
    <property type="entry name" value="Elp3"/>
    <property type="match status" value="1"/>
</dbReference>
<dbReference type="SUPFAM" id="SSF102114">
    <property type="entry name" value="Radical SAM enzymes"/>
    <property type="match status" value="1"/>
</dbReference>
<dbReference type="PROSITE" id="PS51918">
    <property type="entry name" value="RADICAL_SAM"/>
    <property type="match status" value="1"/>
</dbReference>
<comment type="function">
    <text evidence="1">Catalyzes the conversion of dethiobiotin (DTB) to biotin by the insertion of a sulfur atom into dethiobiotin via a radical-based mechanism.</text>
</comment>
<comment type="catalytic activity">
    <reaction evidence="1">
        <text>(4R,5S)-dethiobiotin + (sulfur carrier)-SH + 2 reduced [2Fe-2S]-[ferredoxin] + 2 S-adenosyl-L-methionine = (sulfur carrier)-H + biotin + 2 5'-deoxyadenosine + 2 L-methionine + 2 oxidized [2Fe-2S]-[ferredoxin]</text>
        <dbReference type="Rhea" id="RHEA:22060"/>
        <dbReference type="Rhea" id="RHEA-COMP:10000"/>
        <dbReference type="Rhea" id="RHEA-COMP:10001"/>
        <dbReference type="Rhea" id="RHEA-COMP:14737"/>
        <dbReference type="Rhea" id="RHEA-COMP:14739"/>
        <dbReference type="ChEBI" id="CHEBI:17319"/>
        <dbReference type="ChEBI" id="CHEBI:29917"/>
        <dbReference type="ChEBI" id="CHEBI:33737"/>
        <dbReference type="ChEBI" id="CHEBI:33738"/>
        <dbReference type="ChEBI" id="CHEBI:57586"/>
        <dbReference type="ChEBI" id="CHEBI:57844"/>
        <dbReference type="ChEBI" id="CHEBI:59789"/>
        <dbReference type="ChEBI" id="CHEBI:64428"/>
        <dbReference type="ChEBI" id="CHEBI:149473"/>
        <dbReference type="EC" id="2.8.1.6"/>
    </reaction>
</comment>
<comment type="cofactor">
    <cofactor evidence="1">
        <name>[4Fe-4S] cluster</name>
        <dbReference type="ChEBI" id="CHEBI:49883"/>
    </cofactor>
    <text evidence="1">Binds 1 [4Fe-4S] cluster. The cluster is coordinated with 3 cysteines and an exchangeable S-adenosyl-L-methionine.</text>
</comment>
<comment type="cofactor">
    <cofactor evidence="1">
        <name>[2Fe-2S] cluster</name>
        <dbReference type="ChEBI" id="CHEBI:190135"/>
    </cofactor>
    <text evidence="1">Binds 1 [2Fe-2S] cluster. The cluster is coordinated with 3 cysteines and 1 arginine.</text>
</comment>
<comment type="pathway">
    <text evidence="1">Cofactor biosynthesis; biotin biosynthesis; biotin from 7,8-diaminononanoate: step 2/2.</text>
</comment>
<comment type="subunit">
    <text evidence="1">Homodimer.</text>
</comment>
<comment type="similarity">
    <text evidence="1">Belongs to the radical SAM superfamily. Biotin synthase family.</text>
</comment>
<sequence>MATYHHWTVGQALALFDKPLLELLFEAQQVHRQHFDPRQVQVSTLLSIKTGACPEDCKYCPQSSRYKTGLESERLMQVEQVLESAKKAKAAGSTRFCMGAAWKNPHERDMPYLAKMVEGVKALGMETCMTLGSLSKQQAHRLADAGLDYYNHNLDTSPEFYGSIITTRSYQERLDTLNEVRDAGIKVCSGGIVGLGETVRDRAGLLVQLANLPKPPESVPINMLVKVKGTPLENNAEVDAFEFIRTIAVARIMMPSSYVRLSAGREQMNEQTQAMCFMAGANSIFYGCKLLTTPNPDEDKDLQLFRKLGLNPQQTATSHGDREQQQALTEQLLHGDTAQFYNAAV</sequence>
<name>BIOB_YERPB</name>
<reference key="1">
    <citation type="submission" date="2008-04" db="EMBL/GenBank/DDBJ databases">
        <title>Complete sequence of Yersinia pseudotuberculosis PB1/+.</title>
        <authorList>
            <person name="Copeland A."/>
            <person name="Lucas S."/>
            <person name="Lapidus A."/>
            <person name="Glavina del Rio T."/>
            <person name="Dalin E."/>
            <person name="Tice H."/>
            <person name="Bruce D."/>
            <person name="Goodwin L."/>
            <person name="Pitluck S."/>
            <person name="Munk A.C."/>
            <person name="Brettin T."/>
            <person name="Detter J.C."/>
            <person name="Han C."/>
            <person name="Tapia R."/>
            <person name="Schmutz J."/>
            <person name="Larimer F."/>
            <person name="Land M."/>
            <person name="Hauser L."/>
            <person name="Challacombe J.F."/>
            <person name="Green L."/>
            <person name="Lindler L.E."/>
            <person name="Nikolich M.P."/>
            <person name="Richardson P."/>
        </authorList>
    </citation>
    <scope>NUCLEOTIDE SEQUENCE [LARGE SCALE GENOMIC DNA]</scope>
    <source>
        <strain>PB1/+</strain>
    </source>
</reference>
<organism>
    <name type="scientific">Yersinia pseudotuberculosis serotype IB (strain PB1/+)</name>
    <dbReference type="NCBI Taxonomy" id="502801"/>
    <lineage>
        <taxon>Bacteria</taxon>
        <taxon>Pseudomonadati</taxon>
        <taxon>Pseudomonadota</taxon>
        <taxon>Gammaproteobacteria</taxon>
        <taxon>Enterobacterales</taxon>
        <taxon>Yersiniaceae</taxon>
        <taxon>Yersinia</taxon>
    </lineage>
</organism>
<protein>
    <recommendedName>
        <fullName evidence="1">Biotin synthase</fullName>
        <ecNumber evidence="1">2.8.1.6</ecNumber>
    </recommendedName>
</protein>
<accession>B2K8T0</accession>